<comment type="catalytic activity">
    <reaction evidence="1">
        <text>5-amino-1-(5-phospho-D-ribosyl)imidazole-4-carboxylate + L-aspartate + ATP = (2S)-2-[5-amino-1-(5-phospho-beta-D-ribosyl)imidazole-4-carboxamido]succinate + ADP + phosphate + 2 H(+)</text>
        <dbReference type="Rhea" id="RHEA:22628"/>
        <dbReference type="ChEBI" id="CHEBI:15378"/>
        <dbReference type="ChEBI" id="CHEBI:29991"/>
        <dbReference type="ChEBI" id="CHEBI:30616"/>
        <dbReference type="ChEBI" id="CHEBI:43474"/>
        <dbReference type="ChEBI" id="CHEBI:58443"/>
        <dbReference type="ChEBI" id="CHEBI:77657"/>
        <dbReference type="ChEBI" id="CHEBI:456216"/>
        <dbReference type="EC" id="6.3.2.6"/>
    </reaction>
</comment>
<comment type="pathway">
    <text evidence="1">Purine metabolism; IMP biosynthesis via de novo pathway; 5-amino-1-(5-phospho-D-ribosyl)imidazole-4-carboxamide from 5-amino-1-(5-phospho-D-ribosyl)imidazole-4-carboxylate: step 1/2.</text>
</comment>
<comment type="similarity">
    <text evidence="1">Belongs to the SAICAR synthetase family.</text>
</comment>
<sequence length="230" mass="26274">MNYEGKTKIVKVTGDYALLEFKDDITAGDGLKHDVLTGKGSICAETTAILMKYLSEKDIKTHLVEYIPPRTLKVIPLKMFPLEVVVRLKKAGSFVRRYGGAEGEDLPVPLVEFFIKDDERHDPMVCVDHLEILGIATKKQAEKMKEAAVKITLALKEFFERANFELWDIKYEFGLDKDGNVVLGDEISPDTFRLRNKGEIFDKDVYRRDLGDPLKKYREVLELCRSLNSQ</sequence>
<feature type="chain" id="PRO_1000117859" description="Phosphoribosylaminoimidazole-succinocarboxamide synthase">
    <location>
        <begin position="1"/>
        <end position="230"/>
    </location>
</feature>
<protein>
    <recommendedName>
        <fullName evidence="1">Phosphoribosylaminoimidazole-succinocarboxamide synthase</fullName>
        <ecNumber evidence="1">6.3.2.6</ecNumber>
    </recommendedName>
    <alternativeName>
        <fullName evidence="1">SAICAR synthetase</fullName>
    </alternativeName>
</protein>
<reference key="1">
    <citation type="journal article" date="2011" name="J. Bacteriol.">
        <title>Genome sequence of Thermotoga sp. strain RQ2, a hyperthermophilic bacterium isolated from a geothermally heated region of the seafloor near Ribeira Quente, the Azores.</title>
        <authorList>
            <person name="Swithers K.S."/>
            <person name="DiPippo J.L."/>
            <person name="Bruce D.C."/>
            <person name="Detter C."/>
            <person name="Tapia R."/>
            <person name="Han S."/>
            <person name="Saunders E."/>
            <person name="Goodwin L.A."/>
            <person name="Han J."/>
            <person name="Woyke T."/>
            <person name="Pitluck S."/>
            <person name="Pennacchio L."/>
            <person name="Nolan M."/>
            <person name="Mikhailova N."/>
            <person name="Lykidis A."/>
            <person name="Land M.L."/>
            <person name="Brettin T."/>
            <person name="Stetter K.O."/>
            <person name="Nelson K.E."/>
            <person name="Gogarten J.P."/>
            <person name="Noll K.M."/>
        </authorList>
    </citation>
    <scope>NUCLEOTIDE SEQUENCE [LARGE SCALE GENOMIC DNA]</scope>
    <source>
        <strain>RQ2</strain>
    </source>
</reference>
<evidence type="ECO:0000255" key="1">
    <source>
        <dbReference type="HAMAP-Rule" id="MF_00137"/>
    </source>
</evidence>
<keyword id="KW-0067">ATP-binding</keyword>
<keyword id="KW-0436">Ligase</keyword>
<keyword id="KW-0547">Nucleotide-binding</keyword>
<keyword id="KW-0658">Purine biosynthesis</keyword>
<gene>
    <name evidence="1" type="primary">purC</name>
    <name type="ordered locus">TRQ2_1577</name>
</gene>
<dbReference type="EC" id="6.3.2.6" evidence="1"/>
<dbReference type="EMBL" id="CP000969">
    <property type="protein sequence ID" value="ACB09913.1"/>
    <property type="molecule type" value="Genomic_DNA"/>
</dbReference>
<dbReference type="RefSeq" id="WP_012311199.1">
    <property type="nucleotide sequence ID" value="NC_010483.1"/>
</dbReference>
<dbReference type="SMR" id="B1LCA5"/>
<dbReference type="KEGG" id="trq:TRQ2_1577"/>
<dbReference type="HOGENOM" id="CLU_061495_2_0_0"/>
<dbReference type="UniPathway" id="UPA00074">
    <property type="reaction ID" value="UER00131"/>
</dbReference>
<dbReference type="Proteomes" id="UP000001687">
    <property type="component" value="Chromosome"/>
</dbReference>
<dbReference type="GO" id="GO:0005524">
    <property type="term" value="F:ATP binding"/>
    <property type="evidence" value="ECO:0007669"/>
    <property type="project" value="UniProtKB-KW"/>
</dbReference>
<dbReference type="GO" id="GO:0004639">
    <property type="term" value="F:phosphoribosylaminoimidazolesuccinocarboxamide synthase activity"/>
    <property type="evidence" value="ECO:0007669"/>
    <property type="project" value="UniProtKB-UniRule"/>
</dbReference>
<dbReference type="GO" id="GO:0006189">
    <property type="term" value="P:'de novo' IMP biosynthetic process"/>
    <property type="evidence" value="ECO:0007669"/>
    <property type="project" value="UniProtKB-UniRule"/>
</dbReference>
<dbReference type="GO" id="GO:0009236">
    <property type="term" value="P:cobalamin biosynthetic process"/>
    <property type="evidence" value="ECO:0007669"/>
    <property type="project" value="InterPro"/>
</dbReference>
<dbReference type="CDD" id="cd01415">
    <property type="entry name" value="SAICAR_synt_PurC"/>
    <property type="match status" value="1"/>
</dbReference>
<dbReference type="FunFam" id="3.30.200.20:FF:000865">
    <property type="entry name" value="Phosphoribosylaminoimidazole-succinocarboxamide synthase"/>
    <property type="match status" value="1"/>
</dbReference>
<dbReference type="FunFam" id="3.30.470.20:FF:000006">
    <property type="entry name" value="Phosphoribosylaminoimidazole-succinocarboxamide synthase"/>
    <property type="match status" value="1"/>
</dbReference>
<dbReference type="Gene3D" id="3.30.470.20">
    <property type="entry name" value="ATP-grasp fold, B domain"/>
    <property type="match status" value="1"/>
</dbReference>
<dbReference type="Gene3D" id="3.30.200.20">
    <property type="entry name" value="Phosphorylase Kinase, domain 1"/>
    <property type="match status" value="1"/>
</dbReference>
<dbReference type="HAMAP" id="MF_00137">
    <property type="entry name" value="SAICAR_synth"/>
    <property type="match status" value="1"/>
</dbReference>
<dbReference type="InterPro" id="IPR028923">
    <property type="entry name" value="SAICAR_synt/ADE2_N"/>
</dbReference>
<dbReference type="InterPro" id="IPR033934">
    <property type="entry name" value="SAICAR_synt_PurC"/>
</dbReference>
<dbReference type="InterPro" id="IPR050089">
    <property type="entry name" value="SAICAR_synthetase"/>
</dbReference>
<dbReference type="InterPro" id="IPR018236">
    <property type="entry name" value="SAICAR_synthetase_CS"/>
</dbReference>
<dbReference type="PANTHER" id="PTHR43599">
    <property type="entry name" value="MULTIFUNCTIONAL PROTEIN ADE2"/>
    <property type="match status" value="1"/>
</dbReference>
<dbReference type="PANTHER" id="PTHR43599:SF3">
    <property type="entry name" value="SI:DKEY-6E2.2"/>
    <property type="match status" value="1"/>
</dbReference>
<dbReference type="Pfam" id="PF01259">
    <property type="entry name" value="SAICAR_synt"/>
    <property type="match status" value="1"/>
</dbReference>
<dbReference type="SUPFAM" id="SSF56104">
    <property type="entry name" value="SAICAR synthase-like"/>
    <property type="match status" value="1"/>
</dbReference>
<dbReference type="PROSITE" id="PS01057">
    <property type="entry name" value="SAICAR_SYNTHETASE_1"/>
    <property type="match status" value="1"/>
</dbReference>
<organism>
    <name type="scientific">Thermotoga sp. (strain RQ2)</name>
    <dbReference type="NCBI Taxonomy" id="126740"/>
    <lineage>
        <taxon>Bacteria</taxon>
        <taxon>Thermotogati</taxon>
        <taxon>Thermotogota</taxon>
        <taxon>Thermotogae</taxon>
        <taxon>Thermotogales</taxon>
        <taxon>Thermotogaceae</taxon>
        <taxon>Thermotoga</taxon>
    </lineage>
</organism>
<proteinExistence type="inferred from homology"/>
<name>PUR7_THESQ</name>
<accession>B1LCA5</accession>